<sequence length="467" mass="51672">MSLHLYNTLHRRVEPFEPLDPACPTMYVCGPTVYNYVHIGNARGPVVFGVLAALLRRRYGALRYARNITDVDDKINTAAQEQGVPISAITERFCAAYREDMKKLGVEPPDIEPEATAHMPQIIAMIEQLIERQHAYVAMEHVLFAVNSFADYGQLSRRDTEEMLAGARVEIAPYKRDPSDFVLWKPSSDQLPGWDSPWGRGRPGWHIECSAMAAAHLGETIDIHAGGIDLQFPHHENEIAQSRCAHGSSTFARVWMHNGMLNFEGAKMSKSLGNIETVHELVAKHPPEALRYALLSAHYRKPLDWSEALIAQSVRTLNRLYGTLRDLAAYPARAIIPGNIEAALDDDLNTPQALAELATLANEARIQLADTTHHAAAEVTTALTRLKAKLLGAGLALGLLQQTPEAWFSQGTNESDETHIQALIDARGAAKQARDFVRADAIRAQLAAEGIVLEDTPQGVRWMKQHT</sequence>
<name>SYC_XYLFT</name>
<dbReference type="EC" id="6.1.1.16" evidence="1"/>
<dbReference type="EMBL" id="AE009442">
    <property type="protein sequence ID" value="AAO28172.1"/>
    <property type="status" value="ALT_INIT"/>
    <property type="molecule type" value="Genomic_DNA"/>
</dbReference>
<dbReference type="RefSeq" id="WP_004087897.1">
    <property type="nucleotide sequence ID" value="NC_004556.1"/>
</dbReference>
<dbReference type="SMR" id="Q87EL7"/>
<dbReference type="GeneID" id="93903989"/>
<dbReference type="KEGG" id="xft:PD_0287"/>
<dbReference type="HOGENOM" id="CLU_013528_0_1_6"/>
<dbReference type="Proteomes" id="UP000002516">
    <property type="component" value="Chromosome"/>
</dbReference>
<dbReference type="GO" id="GO:0005829">
    <property type="term" value="C:cytosol"/>
    <property type="evidence" value="ECO:0007669"/>
    <property type="project" value="TreeGrafter"/>
</dbReference>
<dbReference type="GO" id="GO:0005524">
    <property type="term" value="F:ATP binding"/>
    <property type="evidence" value="ECO:0007669"/>
    <property type="project" value="UniProtKB-UniRule"/>
</dbReference>
<dbReference type="GO" id="GO:0004817">
    <property type="term" value="F:cysteine-tRNA ligase activity"/>
    <property type="evidence" value="ECO:0007669"/>
    <property type="project" value="UniProtKB-UniRule"/>
</dbReference>
<dbReference type="GO" id="GO:0008270">
    <property type="term" value="F:zinc ion binding"/>
    <property type="evidence" value="ECO:0007669"/>
    <property type="project" value="UniProtKB-UniRule"/>
</dbReference>
<dbReference type="GO" id="GO:0006423">
    <property type="term" value="P:cysteinyl-tRNA aminoacylation"/>
    <property type="evidence" value="ECO:0007669"/>
    <property type="project" value="UniProtKB-UniRule"/>
</dbReference>
<dbReference type="CDD" id="cd00672">
    <property type="entry name" value="CysRS_core"/>
    <property type="match status" value="1"/>
</dbReference>
<dbReference type="FunFam" id="3.40.50.620:FF:000068">
    <property type="entry name" value="Cysteine--tRNA ligase"/>
    <property type="match status" value="1"/>
</dbReference>
<dbReference type="Gene3D" id="1.20.120.1910">
    <property type="entry name" value="Cysteine-tRNA ligase, C-terminal anti-codon recognition domain"/>
    <property type="match status" value="1"/>
</dbReference>
<dbReference type="Gene3D" id="3.40.50.620">
    <property type="entry name" value="HUPs"/>
    <property type="match status" value="1"/>
</dbReference>
<dbReference type="HAMAP" id="MF_00041">
    <property type="entry name" value="Cys_tRNA_synth"/>
    <property type="match status" value="1"/>
</dbReference>
<dbReference type="InterPro" id="IPR015803">
    <property type="entry name" value="Cys-tRNA-ligase"/>
</dbReference>
<dbReference type="InterPro" id="IPR015273">
    <property type="entry name" value="Cys-tRNA-synt_Ia_DALR"/>
</dbReference>
<dbReference type="InterPro" id="IPR024909">
    <property type="entry name" value="Cys-tRNA/MSH_ligase"/>
</dbReference>
<dbReference type="InterPro" id="IPR014729">
    <property type="entry name" value="Rossmann-like_a/b/a_fold"/>
</dbReference>
<dbReference type="InterPro" id="IPR032678">
    <property type="entry name" value="tRNA-synt_1_cat_dom"/>
</dbReference>
<dbReference type="InterPro" id="IPR009080">
    <property type="entry name" value="tRNAsynth_Ia_anticodon-bd"/>
</dbReference>
<dbReference type="NCBIfam" id="TIGR00435">
    <property type="entry name" value="cysS"/>
    <property type="match status" value="1"/>
</dbReference>
<dbReference type="PANTHER" id="PTHR10890:SF3">
    <property type="entry name" value="CYSTEINE--TRNA LIGASE, CYTOPLASMIC"/>
    <property type="match status" value="1"/>
</dbReference>
<dbReference type="PANTHER" id="PTHR10890">
    <property type="entry name" value="CYSTEINYL-TRNA SYNTHETASE"/>
    <property type="match status" value="1"/>
</dbReference>
<dbReference type="Pfam" id="PF09190">
    <property type="entry name" value="DALR_2"/>
    <property type="match status" value="1"/>
</dbReference>
<dbReference type="Pfam" id="PF01406">
    <property type="entry name" value="tRNA-synt_1e"/>
    <property type="match status" value="1"/>
</dbReference>
<dbReference type="PRINTS" id="PR00983">
    <property type="entry name" value="TRNASYNTHCYS"/>
</dbReference>
<dbReference type="SMART" id="SM00840">
    <property type="entry name" value="DALR_2"/>
    <property type="match status" value="1"/>
</dbReference>
<dbReference type="SUPFAM" id="SSF47323">
    <property type="entry name" value="Anticodon-binding domain of a subclass of class I aminoacyl-tRNA synthetases"/>
    <property type="match status" value="1"/>
</dbReference>
<dbReference type="SUPFAM" id="SSF52374">
    <property type="entry name" value="Nucleotidylyl transferase"/>
    <property type="match status" value="1"/>
</dbReference>
<keyword id="KW-0030">Aminoacyl-tRNA synthetase</keyword>
<keyword id="KW-0067">ATP-binding</keyword>
<keyword id="KW-0963">Cytoplasm</keyword>
<keyword id="KW-0436">Ligase</keyword>
<keyword id="KW-0479">Metal-binding</keyword>
<keyword id="KW-0547">Nucleotide-binding</keyword>
<keyword id="KW-0648">Protein biosynthesis</keyword>
<keyword id="KW-1185">Reference proteome</keyword>
<keyword id="KW-0862">Zinc</keyword>
<comment type="catalytic activity">
    <reaction evidence="1">
        <text>tRNA(Cys) + L-cysteine + ATP = L-cysteinyl-tRNA(Cys) + AMP + diphosphate</text>
        <dbReference type="Rhea" id="RHEA:17773"/>
        <dbReference type="Rhea" id="RHEA-COMP:9661"/>
        <dbReference type="Rhea" id="RHEA-COMP:9679"/>
        <dbReference type="ChEBI" id="CHEBI:30616"/>
        <dbReference type="ChEBI" id="CHEBI:33019"/>
        <dbReference type="ChEBI" id="CHEBI:35235"/>
        <dbReference type="ChEBI" id="CHEBI:78442"/>
        <dbReference type="ChEBI" id="CHEBI:78517"/>
        <dbReference type="ChEBI" id="CHEBI:456215"/>
        <dbReference type="EC" id="6.1.1.16"/>
    </reaction>
</comment>
<comment type="cofactor">
    <cofactor evidence="1">
        <name>Zn(2+)</name>
        <dbReference type="ChEBI" id="CHEBI:29105"/>
    </cofactor>
    <text evidence="1">Binds 1 zinc ion per subunit.</text>
</comment>
<comment type="subunit">
    <text evidence="1">Monomer.</text>
</comment>
<comment type="subcellular location">
    <subcellularLocation>
        <location evidence="1">Cytoplasm</location>
    </subcellularLocation>
</comment>
<comment type="similarity">
    <text evidence="1">Belongs to the class-I aminoacyl-tRNA synthetase family.</text>
</comment>
<comment type="sequence caution" evidence="2">
    <conflict type="erroneous initiation">
        <sequence resource="EMBL-CDS" id="AAO28172"/>
    </conflict>
</comment>
<organism>
    <name type="scientific">Xylella fastidiosa (strain Temecula1 / ATCC 700964)</name>
    <dbReference type="NCBI Taxonomy" id="183190"/>
    <lineage>
        <taxon>Bacteria</taxon>
        <taxon>Pseudomonadati</taxon>
        <taxon>Pseudomonadota</taxon>
        <taxon>Gammaproteobacteria</taxon>
        <taxon>Lysobacterales</taxon>
        <taxon>Lysobacteraceae</taxon>
        <taxon>Xylella</taxon>
    </lineage>
</organism>
<accession>Q87EL7</accession>
<evidence type="ECO:0000255" key="1">
    <source>
        <dbReference type="HAMAP-Rule" id="MF_00041"/>
    </source>
</evidence>
<evidence type="ECO:0000305" key="2"/>
<proteinExistence type="inferred from homology"/>
<gene>
    <name evidence="1" type="primary">cysS</name>
    <name type="ordered locus">PD_0287</name>
</gene>
<feature type="chain" id="PRO_0000159528" description="Cysteine--tRNA ligase">
    <location>
        <begin position="1"/>
        <end position="467"/>
    </location>
</feature>
<feature type="short sequence motif" description="'HIGH' region">
    <location>
        <begin position="31"/>
        <end position="41"/>
    </location>
</feature>
<feature type="short sequence motif" description="'KMSKS' region">
    <location>
        <begin position="267"/>
        <end position="271"/>
    </location>
</feature>
<feature type="binding site" evidence="1">
    <location>
        <position position="29"/>
    </location>
    <ligand>
        <name>Zn(2+)</name>
        <dbReference type="ChEBI" id="CHEBI:29105"/>
    </ligand>
</feature>
<feature type="binding site" evidence="1">
    <location>
        <position position="209"/>
    </location>
    <ligand>
        <name>Zn(2+)</name>
        <dbReference type="ChEBI" id="CHEBI:29105"/>
    </ligand>
</feature>
<feature type="binding site" evidence="1">
    <location>
        <position position="234"/>
    </location>
    <ligand>
        <name>Zn(2+)</name>
        <dbReference type="ChEBI" id="CHEBI:29105"/>
    </ligand>
</feature>
<feature type="binding site" evidence="1">
    <location>
        <position position="238"/>
    </location>
    <ligand>
        <name>Zn(2+)</name>
        <dbReference type="ChEBI" id="CHEBI:29105"/>
    </ligand>
</feature>
<feature type="binding site" evidence="1">
    <location>
        <position position="270"/>
    </location>
    <ligand>
        <name>ATP</name>
        <dbReference type="ChEBI" id="CHEBI:30616"/>
    </ligand>
</feature>
<reference key="1">
    <citation type="journal article" date="2003" name="J. Bacteriol.">
        <title>Comparative analyses of the complete genome sequences of Pierce's disease and citrus variegated chlorosis strains of Xylella fastidiosa.</title>
        <authorList>
            <person name="Van Sluys M.A."/>
            <person name="de Oliveira M.C."/>
            <person name="Monteiro-Vitorello C.B."/>
            <person name="Miyaki C.Y."/>
            <person name="Furlan L.R."/>
            <person name="Camargo L.E.A."/>
            <person name="da Silva A.C.R."/>
            <person name="Moon D.H."/>
            <person name="Takita M.A."/>
            <person name="Lemos E.G.M."/>
            <person name="Machado M.A."/>
            <person name="Ferro M.I.T."/>
            <person name="da Silva F.R."/>
            <person name="Goldman M.H.S."/>
            <person name="Goldman G.H."/>
            <person name="Lemos M.V.F."/>
            <person name="El-Dorry H."/>
            <person name="Tsai S.M."/>
            <person name="Carrer H."/>
            <person name="Carraro D.M."/>
            <person name="de Oliveira R.C."/>
            <person name="Nunes L.R."/>
            <person name="Siqueira W.J."/>
            <person name="Coutinho L.L."/>
            <person name="Kimura E.T."/>
            <person name="Ferro E.S."/>
            <person name="Harakava R."/>
            <person name="Kuramae E.E."/>
            <person name="Marino C.L."/>
            <person name="Giglioti E."/>
            <person name="Abreu I.L."/>
            <person name="Alves L.M.C."/>
            <person name="do Amaral A.M."/>
            <person name="Baia G.S."/>
            <person name="Blanco S.R."/>
            <person name="Brito M.S."/>
            <person name="Cannavan F.S."/>
            <person name="Celestino A.V."/>
            <person name="da Cunha A.F."/>
            <person name="Fenille R.C."/>
            <person name="Ferro J.A."/>
            <person name="Formighieri E.F."/>
            <person name="Kishi L.T."/>
            <person name="Leoni S.G."/>
            <person name="Oliveira A.R."/>
            <person name="Rosa V.E. Jr."/>
            <person name="Sassaki F.T."/>
            <person name="Sena J.A.D."/>
            <person name="de Souza A.A."/>
            <person name="Truffi D."/>
            <person name="Tsukumo F."/>
            <person name="Yanai G.M."/>
            <person name="Zaros L.G."/>
            <person name="Civerolo E.L."/>
            <person name="Simpson A.J.G."/>
            <person name="Almeida N.F. Jr."/>
            <person name="Setubal J.C."/>
            <person name="Kitajima J.P."/>
        </authorList>
    </citation>
    <scope>NUCLEOTIDE SEQUENCE [LARGE SCALE GENOMIC DNA]</scope>
    <source>
        <strain>Temecula1 / ATCC 700964</strain>
    </source>
</reference>
<protein>
    <recommendedName>
        <fullName evidence="1">Cysteine--tRNA ligase</fullName>
        <ecNumber evidence="1">6.1.1.16</ecNumber>
    </recommendedName>
    <alternativeName>
        <fullName evidence="1">Cysteinyl-tRNA synthetase</fullName>
        <shortName evidence="1">CysRS</shortName>
    </alternativeName>
</protein>